<organism>
    <name type="scientific">Danio rerio</name>
    <name type="common">Zebrafish</name>
    <name type="synonym">Brachydanio rerio</name>
    <dbReference type="NCBI Taxonomy" id="7955"/>
    <lineage>
        <taxon>Eukaryota</taxon>
        <taxon>Metazoa</taxon>
        <taxon>Chordata</taxon>
        <taxon>Craniata</taxon>
        <taxon>Vertebrata</taxon>
        <taxon>Euteleostomi</taxon>
        <taxon>Actinopterygii</taxon>
        <taxon>Neopterygii</taxon>
        <taxon>Teleostei</taxon>
        <taxon>Ostariophysi</taxon>
        <taxon>Cypriniformes</taxon>
        <taxon>Danionidae</taxon>
        <taxon>Danioninae</taxon>
        <taxon>Danio</taxon>
    </lineage>
</organism>
<comment type="function">
    <text evidence="1 2 4">Specific subunit of the TRAPP (transport protein particle) II complex, a highly conserved vesicle tethering complex that functions in late Golgi trafficking as a membrane tether (By similarity). TRAPP II complex also has GEF activity toward RAB1A (By similarity). TRAPPC14 is required for ciliogenesis (PubMed:30715179).</text>
</comment>
<comment type="subunit">
    <text evidence="2">Component of the multisubunit TRAPP II complex, which includes at least TRAPPC1, TRAPPC2, TRAPPC2L, TRAPPC3, TRAPPC4, TRAPPC5, TRAPPC6A/B, TRAPPC9, TRAPPC10 and TRAPPC14. TRAPPC9, TRAPPC10 and TRAPPC14 are specific subunits of the TRAPP II complex. Interacts with alpha-tubulin during mitosis.</text>
</comment>
<comment type="subcellular location">
    <subcellularLocation>
        <location evidence="2">Cytoplasm</location>
        <location evidence="2">Cytoskeleton</location>
        <location evidence="2">Spindle</location>
    </subcellularLocation>
    <subcellularLocation>
        <location evidence="2">Vesicle</location>
    </subcellularLocation>
    <subcellularLocation>
        <location evidence="2">Midbody</location>
    </subcellularLocation>
    <text evidence="2">During mitosis, precedes alpha-tubulin in gap formation of cell abscission at the midbody and is co-localized with PLK1 at the edges of microtubules extensions of daughter cells post cytokinesis abscission.</text>
</comment>
<comment type="disruption phenotype">
    <text evidence="4 5">Morpholino knockdown of the protein in early embryos results in curved bodies and small eyes. Morphants exhibit reduced ciliation in otic vesicles, neuromasts, and olfactory placodes (PubMed:31467083). In a knockout model mutant animals show head to body ratios lower than those of controls. They have decreased brain cell proliferation rate at 24 hpf (PubMed:30715179).</text>
</comment>
<name>TPC14_DANRE</name>
<protein>
    <recommendedName>
        <fullName>Trafficking protein particle complex subunit 14</fullName>
    </recommendedName>
    <alternativeName>
        <fullName evidence="6">Microtubule-associated protein 11</fullName>
    </alternativeName>
</protein>
<proteinExistence type="inferred from homology"/>
<dbReference type="EMBL" id="CR848737">
    <property type="status" value="NOT_ANNOTATED_CDS"/>
    <property type="molecule type" value="Genomic_DNA"/>
</dbReference>
<dbReference type="RefSeq" id="NP_001410740.1">
    <property type="nucleotide sequence ID" value="NM_001423811.1"/>
</dbReference>
<dbReference type="RefSeq" id="XP_001339329.2">
    <property type="nucleotide sequence ID" value="XM_001339293.6"/>
</dbReference>
<dbReference type="FunCoup" id="E7F240">
    <property type="interactions" value="1561"/>
</dbReference>
<dbReference type="STRING" id="7955.ENSDARP00000102748"/>
<dbReference type="PaxDb" id="7955-ENSDARP00000102748"/>
<dbReference type="PeptideAtlas" id="E7F240"/>
<dbReference type="Ensembl" id="ENSDART00000109268">
    <property type="protein sequence ID" value="ENSDARP00000102748"/>
    <property type="gene ID" value="ENSDARG00000078891"/>
</dbReference>
<dbReference type="GeneID" id="100003958"/>
<dbReference type="eggNOG" id="ENOG502QSBJ">
    <property type="taxonomic scope" value="Eukaryota"/>
</dbReference>
<dbReference type="HOGENOM" id="CLU_031637_0_0_1"/>
<dbReference type="InParanoid" id="E7F240"/>
<dbReference type="OMA" id="FVMTARC"/>
<dbReference type="OrthoDB" id="6047286at2759"/>
<dbReference type="PhylomeDB" id="E7F240"/>
<dbReference type="TreeFam" id="TF331500"/>
<dbReference type="PRO" id="PR:E7F240"/>
<dbReference type="Proteomes" id="UP000000437">
    <property type="component" value="Chromosome 7"/>
</dbReference>
<dbReference type="Bgee" id="ENSDARG00000078891">
    <property type="expression patterns" value="Expressed in brain and 19 other cell types or tissues"/>
</dbReference>
<dbReference type="GO" id="GO:0030496">
    <property type="term" value="C:midbody"/>
    <property type="evidence" value="ECO:0000250"/>
    <property type="project" value="UniProtKB"/>
</dbReference>
<dbReference type="GO" id="GO:0072686">
    <property type="term" value="C:mitotic spindle"/>
    <property type="evidence" value="ECO:0000250"/>
    <property type="project" value="UniProtKB"/>
</dbReference>
<dbReference type="GO" id="GO:1990071">
    <property type="term" value="C:TRAPPII protein complex"/>
    <property type="evidence" value="ECO:0000250"/>
    <property type="project" value="UniProtKB"/>
</dbReference>
<dbReference type="GO" id="GO:0043014">
    <property type="term" value="F:alpha-tubulin binding"/>
    <property type="evidence" value="ECO:0000250"/>
    <property type="project" value="UniProtKB"/>
</dbReference>
<dbReference type="GO" id="GO:0060271">
    <property type="term" value="P:cilium assembly"/>
    <property type="evidence" value="ECO:0000315"/>
    <property type="project" value="ZFIN"/>
</dbReference>
<dbReference type="GO" id="GO:0042127">
    <property type="term" value="P:regulation of cell population proliferation"/>
    <property type="evidence" value="ECO:0000314"/>
    <property type="project" value="UniProtKB"/>
</dbReference>
<dbReference type="InterPro" id="IPR055452">
    <property type="entry name" value="TRAPP14_C"/>
</dbReference>
<dbReference type="InterPro" id="IPR055453">
    <property type="entry name" value="TRAPP14_N"/>
</dbReference>
<dbReference type="InterPro" id="IPR031626">
    <property type="entry name" value="TRAPPC14"/>
</dbReference>
<dbReference type="PANTHER" id="PTHR16096">
    <property type="entry name" value="MICROTUBULE-ASSOCIATED PROTEIN 11"/>
    <property type="match status" value="1"/>
</dbReference>
<dbReference type="PANTHER" id="PTHR16096:SF8">
    <property type="entry name" value="TRAFFICKING PROTEIN PARTICLE COMPLEX SUBUNIT 14"/>
    <property type="match status" value="1"/>
</dbReference>
<dbReference type="Pfam" id="PF23652">
    <property type="entry name" value="TRAPP14_C"/>
    <property type="match status" value="1"/>
</dbReference>
<dbReference type="Pfam" id="PF15806">
    <property type="entry name" value="TRAPP14_N"/>
    <property type="match status" value="1"/>
</dbReference>
<keyword id="KW-0970">Cilium biogenesis/degradation</keyword>
<keyword id="KW-0963">Cytoplasm</keyword>
<keyword id="KW-0206">Cytoskeleton</keyword>
<keyword id="KW-1185">Reference proteome</keyword>
<reference key="1">
    <citation type="journal article" date="2013" name="Nature">
        <title>The zebrafish reference genome sequence and its relationship to the human genome.</title>
        <authorList>
            <person name="Howe K."/>
            <person name="Clark M.D."/>
            <person name="Torroja C.F."/>
            <person name="Torrance J."/>
            <person name="Berthelot C."/>
            <person name="Muffato M."/>
            <person name="Collins J.E."/>
            <person name="Humphray S."/>
            <person name="McLaren K."/>
            <person name="Matthews L."/>
            <person name="McLaren S."/>
            <person name="Sealy I."/>
            <person name="Caccamo M."/>
            <person name="Churcher C."/>
            <person name="Scott C."/>
            <person name="Barrett J.C."/>
            <person name="Koch R."/>
            <person name="Rauch G.J."/>
            <person name="White S."/>
            <person name="Chow W."/>
            <person name="Kilian B."/>
            <person name="Quintais L.T."/>
            <person name="Guerra-Assuncao J.A."/>
            <person name="Zhou Y."/>
            <person name="Gu Y."/>
            <person name="Yen J."/>
            <person name="Vogel J.H."/>
            <person name="Eyre T."/>
            <person name="Redmond S."/>
            <person name="Banerjee R."/>
            <person name="Chi J."/>
            <person name="Fu B."/>
            <person name="Langley E."/>
            <person name="Maguire S.F."/>
            <person name="Laird G.K."/>
            <person name="Lloyd D."/>
            <person name="Kenyon E."/>
            <person name="Donaldson S."/>
            <person name="Sehra H."/>
            <person name="Almeida-King J."/>
            <person name="Loveland J."/>
            <person name="Trevanion S."/>
            <person name="Jones M."/>
            <person name="Quail M."/>
            <person name="Willey D."/>
            <person name="Hunt A."/>
            <person name="Burton J."/>
            <person name="Sims S."/>
            <person name="McLay K."/>
            <person name="Plumb B."/>
            <person name="Davis J."/>
            <person name="Clee C."/>
            <person name="Oliver K."/>
            <person name="Clark R."/>
            <person name="Riddle C."/>
            <person name="Elliot D."/>
            <person name="Threadgold G."/>
            <person name="Harden G."/>
            <person name="Ware D."/>
            <person name="Begum S."/>
            <person name="Mortimore B."/>
            <person name="Kerry G."/>
            <person name="Heath P."/>
            <person name="Phillimore B."/>
            <person name="Tracey A."/>
            <person name="Corby N."/>
            <person name="Dunn M."/>
            <person name="Johnson C."/>
            <person name="Wood J."/>
            <person name="Clark S."/>
            <person name="Pelan S."/>
            <person name="Griffiths G."/>
            <person name="Smith M."/>
            <person name="Glithero R."/>
            <person name="Howden P."/>
            <person name="Barker N."/>
            <person name="Lloyd C."/>
            <person name="Stevens C."/>
            <person name="Harley J."/>
            <person name="Holt K."/>
            <person name="Panagiotidis G."/>
            <person name="Lovell J."/>
            <person name="Beasley H."/>
            <person name="Henderson C."/>
            <person name="Gordon D."/>
            <person name="Auger K."/>
            <person name="Wright D."/>
            <person name="Collins J."/>
            <person name="Raisen C."/>
            <person name="Dyer L."/>
            <person name="Leung K."/>
            <person name="Robertson L."/>
            <person name="Ambridge K."/>
            <person name="Leongamornlert D."/>
            <person name="McGuire S."/>
            <person name="Gilderthorp R."/>
            <person name="Griffiths C."/>
            <person name="Manthravadi D."/>
            <person name="Nichol S."/>
            <person name="Barker G."/>
            <person name="Whitehead S."/>
            <person name="Kay M."/>
            <person name="Brown J."/>
            <person name="Murnane C."/>
            <person name="Gray E."/>
            <person name="Humphries M."/>
            <person name="Sycamore N."/>
            <person name="Barker D."/>
            <person name="Saunders D."/>
            <person name="Wallis J."/>
            <person name="Babbage A."/>
            <person name="Hammond S."/>
            <person name="Mashreghi-Mohammadi M."/>
            <person name="Barr L."/>
            <person name="Martin S."/>
            <person name="Wray P."/>
            <person name="Ellington A."/>
            <person name="Matthews N."/>
            <person name="Ellwood M."/>
            <person name="Woodmansey R."/>
            <person name="Clark G."/>
            <person name="Cooper J."/>
            <person name="Tromans A."/>
            <person name="Grafham D."/>
            <person name="Skuce C."/>
            <person name="Pandian R."/>
            <person name="Andrews R."/>
            <person name="Harrison E."/>
            <person name="Kimberley A."/>
            <person name="Garnett J."/>
            <person name="Fosker N."/>
            <person name="Hall R."/>
            <person name="Garner P."/>
            <person name="Kelly D."/>
            <person name="Bird C."/>
            <person name="Palmer S."/>
            <person name="Gehring I."/>
            <person name="Berger A."/>
            <person name="Dooley C.M."/>
            <person name="Ersan-Urun Z."/>
            <person name="Eser C."/>
            <person name="Geiger H."/>
            <person name="Geisler M."/>
            <person name="Karotki L."/>
            <person name="Kirn A."/>
            <person name="Konantz J."/>
            <person name="Konantz M."/>
            <person name="Oberlander M."/>
            <person name="Rudolph-Geiger S."/>
            <person name="Teucke M."/>
            <person name="Lanz C."/>
            <person name="Raddatz G."/>
            <person name="Osoegawa K."/>
            <person name="Zhu B."/>
            <person name="Rapp A."/>
            <person name="Widaa S."/>
            <person name="Langford C."/>
            <person name="Yang F."/>
            <person name="Schuster S.C."/>
            <person name="Carter N.P."/>
            <person name="Harrow J."/>
            <person name="Ning Z."/>
            <person name="Herrero J."/>
            <person name="Searle S.M."/>
            <person name="Enright A."/>
            <person name="Geisler R."/>
            <person name="Plasterk R.H."/>
            <person name="Lee C."/>
            <person name="Westerfield M."/>
            <person name="de Jong P.J."/>
            <person name="Zon L.I."/>
            <person name="Postlethwait J.H."/>
            <person name="Nusslein-Volhard C."/>
            <person name="Hubbard T.J."/>
            <person name="Roest Crollius H."/>
            <person name="Rogers J."/>
            <person name="Stemple D.L."/>
        </authorList>
    </citation>
    <scope>NUCLEOTIDE SEQUENCE [LARGE SCALE GENOMIC DNA]</scope>
    <source>
        <strain>Tuebingen</strain>
    </source>
</reference>
<reference key="2">
    <citation type="journal article" date="2019" name="Brain">
        <title>Mutations in the microtubule-associated protein MAP11 (C7orf43) cause microcephaly in humans and zebrafish.</title>
        <authorList>
            <person name="Perez Y."/>
            <person name="Bar-Yaacov R."/>
            <person name="Kadir R."/>
            <person name="Wormser O."/>
            <person name="Shelef I."/>
            <person name="Birk O.S."/>
            <person name="Flusser H."/>
            <person name="Birnbaum R.Y."/>
        </authorList>
    </citation>
    <scope>DISRUPTION PHENOTYPE</scope>
</reference>
<reference key="3">
    <citation type="journal article" date="2019" name="J. Biol. Chem.">
        <title>The C7orf43/TRAPPC14 component links the TRAPPII complex to Rabin8 for preciliary vesicle tethering at the mother centriole during ciliogenesis.</title>
        <authorList>
            <person name="Cuenca A."/>
            <person name="Insinna C."/>
            <person name="Zhao H."/>
            <person name="John P."/>
            <person name="Weiss M.A."/>
            <person name="Lu Q."/>
            <person name="Walia V."/>
            <person name="Specht S."/>
            <person name="Manivannan S."/>
            <person name="Stauffer J."/>
            <person name="Peden A.A."/>
            <person name="Westlake C.J."/>
        </authorList>
    </citation>
    <scope>DISRUPTION PHENOTYPE</scope>
    <scope>FUNCTION</scope>
</reference>
<accession>E7F240</accession>
<gene>
    <name type="primary">trappc14</name>
    <name type="synonym">map11</name>
</gene>
<evidence type="ECO:0000250" key="1">
    <source>
        <dbReference type="UniProtKB" id="Q3TLI0"/>
    </source>
</evidence>
<evidence type="ECO:0000250" key="2">
    <source>
        <dbReference type="UniProtKB" id="Q8WVR3"/>
    </source>
</evidence>
<evidence type="ECO:0000256" key="3">
    <source>
        <dbReference type="SAM" id="MobiDB-lite"/>
    </source>
</evidence>
<evidence type="ECO:0000269" key="4">
    <source>
    </source>
</evidence>
<evidence type="ECO:0000269" key="5">
    <source>
    </source>
</evidence>
<evidence type="ECO:0000305" key="6"/>
<feature type="chain" id="PRO_0000446856" description="Trafficking protein particle complex subunit 14">
    <location>
        <begin position="1"/>
        <end position="595"/>
    </location>
</feature>
<feature type="region of interest" description="Disordered" evidence="3">
    <location>
        <begin position="84"/>
        <end position="111"/>
    </location>
</feature>
<feature type="region of interest" description="Disordered" evidence="3">
    <location>
        <begin position="494"/>
        <end position="513"/>
    </location>
</feature>
<sequence>MVLMMESQCEYFMYFPAVPISDLSDPAKYRTLPRRSHLYLGETVRFLLVLRSQSASGSSDGSCGSEQHSSRSWRELAGSLSAVASVSPGDSRQRTQPLYHDYHSSGDECVEDTDEDDAAEAVGCPGRGGPRYRGFRECKPLLIHNNPGNGVREFRRAPVQSPVDEPVVLSDEVIFPLTVSLDKLPVNTLKVKIIVTVWKQEEEKAEIQEHGYLSILQQKSPCQTFRQDLNTFKAQVSTTLNVLPPPTVKCQQMTVSGRHLTVLKVLNGSSQEEVCVRDVKILPNFNASYLPMMPDGSVLLVDNVCHQSGEVAMASFYRMDSESSHLPSMLSALEEQNFLFQLQLNNQPQDDSNEGLEVPLVAVLQWSTSKLPFTNSIYTHYSLPSIRLDRPRFIMTASCPSAVRTRENFRVRYTLLNNLQDFLAVRLVWTPEGRGQKEDPAVNAVVCHSPLSNLGYCRKGSTLSVSVAFQILRAGLFELSQHMKLKLQFTASVSNPPPDARPLSRKNSPSSPAVRDILDRHQASLSLGRSQSFSHQQPSKFHLTRTGSVMERRAITPPVGSPVGRPLYLPPDRNILSLDKIAKRECKVLVLDSHN</sequence>